<feature type="chain" id="PRO_0000159536" description="Cysteine--tRNA ligase">
    <location>
        <begin position="1"/>
        <end position="473"/>
    </location>
</feature>
<feature type="short sequence motif" description="'HIGH' region">
    <location>
        <begin position="30"/>
        <end position="40"/>
    </location>
</feature>
<feature type="short sequence motif" description="'KMSKS' region">
    <location>
        <begin position="270"/>
        <end position="274"/>
    </location>
</feature>
<feature type="binding site" evidence="1">
    <location>
        <position position="28"/>
    </location>
    <ligand>
        <name>Zn(2+)</name>
        <dbReference type="ChEBI" id="CHEBI:29105"/>
    </ligand>
</feature>
<feature type="binding site" evidence="1">
    <location>
        <position position="213"/>
    </location>
    <ligand>
        <name>Zn(2+)</name>
        <dbReference type="ChEBI" id="CHEBI:29105"/>
    </ligand>
</feature>
<feature type="binding site" evidence="1">
    <location>
        <position position="238"/>
    </location>
    <ligand>
        <name>Zn(2+)</name>
        <dbReference type="ChEBI" id="CHEBI:29105"/>
    </ligand>
</feature>
<feature type="binding site" evidence="1">
    <location>
        <position position="242"/>
    </location>
    <ligand>
        <name>Zn(2+)</name>
        <dbReference type="ChEBI" id="CHEBI:29105"/>
    </ligand>
</feature>
<feature type="binding site" evidence="1">
    <location>
        <position position="273"/>
    </location>
    <ligand>
        <name>ATP</name>
        <dbReference type="ChEBI" id="CHEBI:30616"/>
    </ligand>
</feature>
<name>SYC_METAC</name>
<evidence type="ECO:0000255" key="1">
    <source>
        <dbReference type="HAMAP-Rule" id="MF_00041"/>
    </source>
</evidence>
<accession>Q8TSP6</accession>
<sequence>MLQVYNTLTREKEIFKPVKEGEISIYACGPTVYNMPHIGNYRTFLMTDNVLRALEYLGYRVKLVMNITDIDDKTIRDSKAAGMTLKDFTDKYTAEFFKGLDMLNIKRAFAYPRATENVDGMIELARKLIEKGLAYEKDGSVYYRISGFPEYGKLSRLNFDNILIGASVDVDEYDKDNPRDFALLKASTPEEIERGIYYDSPWGKIRPGWHIECSVMAMNSFGPTLDIHTGGVDLIFPHHENEIAQSEGATGKPFVCTWIHGEHLIVEGEKMSKSKRNVFTLPEIVEKYGGEVVRFMFLSVHYRKKLDYSEAFAENAKNNYLRLKETLDNLEFSLKGADDKSYPGDLETLKALPELETQFRHALEDDFNTPRALTVFRELSRTANLYLEAGKNRKVLEKVHTLYRKFSDVLGLFAQAGKEEIPEEVFRLVEEREAARKKKDWGTSDTLREKIRTLGYIIQDKKEGPNVKKAEES</sequence>
<gene>
    <name evidence="1" type="primary">cysS</name>
    <name type="ordered locus">MA_0749</name>
</gene>
<reference key="1">
    <citation type="journal article" date="2002" name="Genome Res.">
        <title>The genome of Methanosarcina acetivorans reveals extensive metabolic and physiological diversity.</title>
        <authorList>
            <person name="Galagan J.E."/>
            <person name="Nusbaum C."/>
            <person name="Roy A."/>
            <person name="Endrizzi M.G."/>
            <person name="Macdonald P."/>
            <person name="FitzHugh W."/>
            <person name="Calvo S."/>
            <person name="Engels R."/>
            <person name="Smirnov S."/>
            <person name="Atnoor D."/>
            <person name="Brown A."/>
            <person name="Allen N."/>
            <person name="Naylor J."/>
            <person name="Stange-Thomann N."/>
            <person name="DeArellano K."/>
            <person name="Johnson R."/>
            <person name="Linton L."/>
            <person name="McEwan P."/>
            <person name="McKernan K."/>
            <person name="Talamas J."/>
            <person name="Tirrell A."/>
            <person name="Ye W."/>
            <person name="Zimmer A."/>
            <person name="Barber R.D."/>
            <person name="Cann I."/>
            <person name="Graham D.E."/>
            <person name="Grahame D.A."/>
            <person name="Guss A.M."/>
            <person name="Hedderich R."/>
            <person name="Ingram-Smith C."/>
            <person name="Kuettner H.C."/>
            <person name="Krzycki J.A."/>
            <person name="Leigh J.A."/>
            <person name="Li W."/>
            <person name="Liu J."/>
            <person name="Mukhopadhyay B."/>
            <person name="Reeve J.N."/>
            <person name="Smith K."/>
            <person name="Springer T.A."/>
            <person name="Umayam L.A."/>
            <person name="White O."/>
            <person name="White R.H."/>
            <person name="de Macario E.C."/>
            <person name="Ferry J.G."/>
            <person name="Jarrell K.F."/>
            <person name="Jing H."/>
            <person name="Macario A.J.L."/>
            <person name="Paulsen I.T."/>
            <person name="Pritchett M."/>
            <person name="Sowers K.R."/>
            <person name="Swanson R.V."/>
            <person name="Zinder S.H."/>
            <person name="Lander E."/>
            <person name="Metcalf W.W."/>
            <person name="Birren B."/>
        </authorList>
    </citation>
    <scope>NUCLEOTIDE SEQUENCE [LARGE SCALE GENOMIC DNA]</scope>
    <source>
        <strain>ATCC 35395 / DSM 2834 / JCM 12185 / C2A</strain>
    </source>
</reference>
<comment type="catalytic activity">
    <reaction evidence="1">
        <text>tRNA(Cys) + L-cysteine + ATP = L-cysteinyl-tRNA(Cys) + AMP + diphosphate</text>
        <dbReference type="Rhea" id="RHEA:17773"/>
        <dbReference type="Rhea" id="RHEA-COMP:9661"/>
        <dbReference type="Rhea" id="RHEA-COMP:9679"/>
        <dbReference type="ChEBI" id="CHEBI:30616"/>
        <dbReference type="ChEBI" id="CHEBI:33019"/>
        <dbReference type="ChEBI" id="CHEBI:35235"/>
        <dbReference type="ChEBI" id="CHEBI:78442"/>
        <dbReference type="ChEBI" id="CHEBI:78517"/>
        <dbReference type="ChEBI" id="CHEBI:456215"/>
        <dbReference type="EC" id="6.1.1.16"/>
    </reaction>
</comment>
<comment type="cofactor">
    <cofactor evidence="1">
        <name>Zn(2+)</name>
        <dbReference type="ChEBI" id="CHEBI:29105"/>
    </cofactor>
    <text evidence="1">Binds 1 zinc ion per subunit.</text>
</comment>
<comment type="subcellular location">
    <subcellularLocation>
        <location evidence="1">Cytoplasm</location>
    </subcellularLocation>
</comment>
<comment type="similarity">
    <text evidence="1">Belongs to the class-I aminoacyl-tRNA synthetase family.</text>
</comment>
<dbReference type="EC" id="6.1.1.16" evidence="1"/>
<dbReference type="EMBL" id="AE010299">
    <property type="protein sequence ID" value="AAM04189.1"/>
    <property type="molecule type" value="Genomic_DNA"/>
</dbReference>
<dbReference type="RefSeq" id="WP_011020794.1">
    <property type="nucleotide sequence ID" value="NC_003552.1"/>
</dbReference>
<dbReference type="SMR" id="Q8TSP6"/>
<dbReference type="STRING" id="188937.MA_0749"/>
<dbReference type="EnsemblBacteria" id="AAM04189">
    <property type="protein sequence ID" value="AAM04189"/>
    <property type="gene ID" value="MA_0749"/>
</dbReference>
<dbReference type="GeneID" id="1472641"/>
<dbReference type="KEGG" id="mac:MA_0749"/>
<dbReference type="HOGENOM" id="CLU_013528_0_1_2"/>
<dbReference type="InParanoid" id="Q8TSP6"/>
<dbReference type="OrthoDB" id="9445at2157"/>
<dbReference type="PhylomeDB" id="Q8TSP6"/>
<dbReference type="Proteomes" id="UP000002487">
    <property type="component" value="Chromosome"/>
</dbReference>
<dbReference type="GO" id="GO:0005737">
    <property type="term" value="C:cytoplasm"/>
    <property type="evidence" value="ECO:0000318"/>
    <property type="project" value="GO_Central"/>
</dbReference>
<dbReference type="GO" id="GO:0005524">
    <property type="term" value="F:ATP binding"/>
    <property type="evidence" value="ECO:0000318"/>
    <property type="project" value="GO_Central"/>
</dbReference>
<dbReference type="GO" id="GO:0004817">
    <property type="term" value="F:cysteine-tRNA ligase activity"/>
    <property type="evidence" value="ECO:0000318"/>
    <property type="project" value="GO_Central"/>
</dbReference>
<dbReference type="GO" id="GO:0008270">
    <property type="term" value="F:zinc ion binding"/>
    <property type="evidence" value="ECO:0007669"/>
    <property type="project" value="UniProtKB-UniRule"/>
</dbReference>
<dbReference type="GO" id="GO:0006423">
    <property type="term" value="P:cysteinyl-tRNA aminoacylation"/>
    <property type="evidence" value="ECO:0000318"/>
    <property type="project" value="GO_Central"/>
</dbReference>
<dbReference type="CDD" id="cd00672">
    <property type="entry name" value="CysRS_core"/>
    <property type="match status" value="1"/>
</dbReference>
<dbReference type="FunFam" id="1.20.120.1910:FF:000018">
    <property type="entry name" value="Cysteine--tRNA ligase"/>
    <property type="match status" value="1"/>
</dbReference>
<dbReference type="FunFam" id="3.40.50.620:FF:000130">
    <property type="entry name" value="Cysteine--tRNA ligase"/>
    <property type="match status" value="1"/>
</dbReference>
<dbReference type="Gene3D" id="1.20.120.1910">
    <property type="entry name" value="Cysteine-tRNA ligase, C-terminal anti-codon recognition domain"/>
    <property type="match status" value="1"/>
</dbReference>
<dbReference type="Gene3D" id="3.40.50.620">
    <property type="entry name" value="HUPs"/>
    <property type="match status" value="1"/>
</dbReference>
<dbReference type="HAMAP" id="MF_00041">
    <property type="entry name" value="Cys_tRNA_synth"/>
    <property type="match status" value="1"/>
</dbReference>
<dbReference type="InterPro" id="IPR015803">
    <property type="entry name" value="Cys-tRNA-ligase"/>
</dbReference>
<dbReference type="InterPro" id="IPR015273">
    <property type="entry name" value="Cys-tRNA-synt_Ia_DALR"/>
</dbReference>
<dbReference type="InterPro" id="IPR024909">
    <property type="entry name" value="Cys-tRNA/MSH_ligase"/>
</dbReference>
<dbReference type="InterPro" id="IPR056411">
    <property type="entry name" value="CysS_C"/>
</dbReference>
<dbReference type="InterPro" id="IPR014729">
    <property type="entry name" value="Rossmann-like_a/b/a_fold"/>
</dbReference>
<dbReference type="InterPro" id="IPR032678">
    <property type="entry name" value="tRNA-synt_1_cat_dom"/>
</dbReference>
<dbReference type="InterPro" id="IPR009080">
    <property type="entry name" value="tRNAsynth_Ia_anticodon-bd"/>
</dbReference>
<dbReference type="NCBIfam" id="TIGR00435">
    <property type="entry name" value="cysS"/>
    <property type="match status" value="1"/>
</dbReference>
<dbReference type="PANTHER" id="PTHR10890:SF3">
    <property type="entry name" value="CYSTEINE--TRNA LIGASE, CYTOPLASMIC"/>
    <property type="match status" value="1"/>
</dbReference>
<dbReference type="PANTHER" id="PTHR10890">
    <property type="entry name" value="CYSTEINYL-TRNA SYNTHETASE"/>
    <property type="match status" value="1"/>
</dbReference>
<dbReference type="Pfam" id="PF23493">
    <property type="entry name" value="CysS_C"/>
    <property type="match status" value="1"/>
</dbReference>
<dbReference type="Pfam" id="PF09190">
    <property type="entry name" value="DALR_2"/>
    <property type="match status" value="1"/>
</dbReference>
<dbReference type="Pfam" id="PF01406">
    <property type="entry name" value="tRNA-synt_1e"/>
    <property type="match status" value="1"/>
</dbReference>
<dbReference type="PRINTS" id="PR00983">
    <property type="entry name" value="TRNASYNTHCYS"/>
</dbReference>
<dbReference type="SMART" id="SM00840">
    <property type="entry name" value="DALR_2"/>
    <property type="match status" value="1"/>
</dbReference>
<dbReference type="SUPFAM" id="SSF47323">
    <property type="entry name" value="Anticodon-binding domain of a subclass of class I aminoacyl-tRNA synthetases"/>
    <property type="match status" value="1"/>
</dbReference>
<dbReference type="SUPFAM" id="SSF52374">
    <property type="entry name" value="Nucleotidylyl transferase"/>
    <property type="match status" value="1"/>
</dbReference>
<organism>
    <name type="scientific">Methanosarcina acetivorans (strain ATCC 35395 / DSM 2834 / JCM 12185 / C2A)</name>
    <dbReference type="NCBI Taxonomy" id="188937"/>
    <lineage>
        <taxon>Archaea</taxon>
        <taxon>Methanobacteriati</taxon>
        <taxon>Methanobacteriota</taxon>
        <taxon>Stenosarchaea group</taxon>
        <taxon>Methanomicrobia</taxon>
        <taxon>Methanosarcinales</taxon>
        <taxon>Methanosarcinaceae</taxon>
        <taxon>Methanosarcina</taxon>
    </lineage>
</organism>
<proteinExistence type="inferred from homology"/>
<keyword id="KW-0030">Aminoacyl-tRNA synthetase</keyword>
<keyword id="KW-0067">ATP-binding</keyword>
<keyword id="KW-0963">Cytoplasm</keyword>
<keyword id="KW-0436">Ligase</keyword>
<keyword id="KW-0479">Metal-binding</keyword>
<keyword id="KW-0547">Nucleotide-binding</keyword>
<keyword id="KW-0648">Protein biosynthesis</keyword>
<keyword id="KW-1185">Reference proteome</keyword>
<keyword id="KW-0862">Zinc</keyword>
<protein>
    <recommendedName>
        <fullName evidence="1">Cysteine--tRNA ligase</fullName>
        <ecNumber evidence="1">6.1.1.16</ecNumber>
    </recommendedName>
    <alternativeName>
        <fullName evidence="1">Cysteinyl-tRNA synthetase</fullName>
        <shortName evidence="1">CysRS</shortName>
    </alternativeName>
</protein>